<dbReference type="EMBL" id="CP001635">
    <property type="protein sequence ID" value="ACS17248.1"/>
    <property type="molecule type" value="Genomic_DNA"/>
</dbReference>
<dbReference type="SMR" id="C5CKF0"/>
<dbReference type="STRING" id="543728.Vapar_0585"/>
<dbReference type="KEGG" id="vap:Vapar_0585"/>
<dbReference type="eggNOG" id="COG0081">
    <property type="taxonomic scope" value="Bacteria"/>
</dbReference>
<dbReference type="HOGENOM" id="CLU_062853_0_0_4"/>
<dbReference type="OrthoDB" id="9803740at2"/>
<dbReference type="GO" id="GO:0022625">
    <property type="term" value="C:cytosolic large ribosomal subunit"/>
    <property type="evidence" value="ECO:0007669"/>
    <property type="project" value="TreeGrafter"/>
</dbReference>
<dbReference type="GO" id="GO:0019843">
    <property type="term" value="F:rRNA binding"/>
    <property type="evidence" value="ECO:0007669"/>
    <property type="project" value="UniProtKB-UniRule"/>
</dbReference>
<dbReference type="GO" id="GO:0003735">
    <property type="term" value="F:structural constituent of ribosome"/>
    <property type="evidence" value="ECO:0007669"/>
    <property type="project" value="InterPro"/>
</dbReference>
<dbReference type="GO" id="GO:0000049">
    <property type="term" value="F:tRNA binding"/>
    <property type="evidence" value="ECO:0007669"/>
    <property type="project" value="UniProtKB-KW"/>
</dbReference>
<dbReference type="GO" id="GO:0006417">
    <property type="term" value="P:regulation of translation"/>
    <property type="evidence" value="ECO:0007669"/>
    <property type="project" value="UniProtKB-KW"/>
</dbReference>
<dbReference type="GO" id="GO:0006412">
    <property type="term" value="P:translation"/>
    <property type="evidence" value="ECO:0007669"/>
    <property type="project" value="UniProtKB-UniRule"/>
</dbReference>
<dbReference type="CDD" id="cd00403">
    <property type="entry name" value="Ribosomal_L1"/>
    <property type="match status" value="1"/>
</dbReference>
<dbReference type="FunFam" id="3.40.50.790:FF:000001">
    <property type="entry name" value="50S ribosomal protein L1"/>
    <property type="match status" value="1"/>
</dbReference>
<dbReference type="Gene3D" id="3.30.190.20">
    <property type="match status" value="1"/>
</dbReference>
<dbReference type="Gene3D" id="3.40.50.790">
    <property type="match status" value="1"/>
</dbReference>
<dbReference type="HAMAP" id="MF_01318_B">
    <property type="entry name" value="Ribosomal_uL1_B"/>
    <property type="match status" value="1"/>
</dbReference>
<dbReference type="InterPro" id="IPR005878">
    <property type="entry name" value="Ribosom_uL1_bac-type"/>
</dbReference>
<dbReference type="InterPro" id="IPR002143">
    <property type="entry name" value="Ribosomal_uL1"/>
</dbReference>
<dbReference type="InterPro" id="IPR023674">
    <property type="entry name" value="Ribosomal_uL1-like"/>
</dbReference>
<dbReference type="InterPro" id="IPR028364">
    <property type="entry name" value="Ribosomal_uL1/biogenesis"/>
</dbReference>
<dbReference type="InterPro" id="IPR016095">
    <property type="entry name" value="Ribosomal_uL1_3-a/b-sand"/>
</dbReference>
<dbReference type="InterPro" id="IPR023673">
    <property type="entry name" value="Ribosomal_uL1_CS"/>
</dbReference>
<dbReference type="NCBIfam" id="TIGR01169">
    <property type="entry name" value="rplA_bact"/>
    <property type="match status" value="1"/>
</dbReference>
<dbReference type="PANTHER" id="PTHR36427">
    <property type="entry name" value="54S RIBOSOMAL PROTEIN L1, MITOCHONDRIAL"/>
    <property type="match status" value="1"/>
</dbReference>
<dbReference type="PANTHER" id="PTHR36427:SF3">
    <property type="entry name" value="LARGE RIBOSOMAL SUBUNIT PROTEIN UL1M"/>
    <property type="match status" value="1"/>
</dbReference>
<dbReference type="Pfam" id="PF00687">
    <property type="entry name" value="Ribosomal_L1"/>
    <property type="match status" value="1"/>
</dbReference>
<dbReference type="PIRSF" id="PIRSF002155">
    <property type="entry name" value="Ribosomal_L1"/>
    <property type="match status" value="1"/>
</dbReference>
<dbReference type="SUPFAM" id="SSF56808">
    <property type="entry name" value="Ribosomal protein L1"/>
    <property type="match status" value="1"/>
</dbReference>
<dbReference type="PROSITE" id="PS01199">
    <property type="entry name" value="RIBOSOMAL_L1"/>
    <property type="match status" value="1"/>
</dbReference>
<evidence type="ECO:0000255" key="1">
    <source>
        <dbReference type="HAMAP-Rule" id="MF_01318"/>
    </source>
</evidence>
<evidence type="ECO:0000305" key="2"/>
<keyword id="KW-0678">Repressor</keyword>
<keyword id="KW-0687">Ribonucleoprotein</keyword>
<keyword id="KW-0689">Ribosomal protein</keyword>
<keyword id="KW-0694">RNA-binding</keyword>
<keyword id="KW-0699">rRNA-binding</keyword>
<keyword id="KW-0810">Translation regulation</keyword>
<keyword id="KW-0820">tRNA-binding</keyword>
<protein>
    <recommendedName>
        <fullName evidence="1">Large ribosomal subunit protein uL1</fullName>
    </recommendedName>
    <alternativeName>
        <fullName evidence="2">50S ribosomal protein L1</fullName>
    </alternativeName>
</protein>
<sequence>MAKITKKQKALAGKVDSNKLYPLADAIGIVKEAATAKFDESIDVAVQLGIDAKKSDQVVRGAVVLPNGTGKTKRVAVFAQGAKAEEAKAAGADIVGMDDLAAMVKAGDMPFDVVIAAPDAMRVVGTLGQILGPRGLMPNPKVGTVTPDVATAVKNAKAGQVQFRVDKAGIVHGTIGRRSFDNDKLQGNLAALIDALVKAKPATSKGVYLRKVAVSSTMGLGVRVDTQTIAAS</sequence>
<feature type="chain" id="PRO_1000214436" description="Large ribosomal subunit protein uL1">
    <location>
        <begin position="1"/>
        <end position="232"/>
    </location>
</feature>
<organism>
    <name type="scientific">Variovorax paradoxus (strain S110)</name>
    <dbReference type="NCBI Taxonomy" id="543728"/>
    <lineage>
        <taxon>Bacteria</taxon>
        <taxon>Pseudomonadati</taxon>
        <taxon>Pseudomonadota</taxon>
        <taxon>Betaproteobacteria</taxon>
        <taxon>Burkholderiales</taxon>
        <taxon>Comamonadaceae</taxon>
        <taxon>Variovorax</taxon>
    </lineage>
</organism>
<accession>C5CKF0</accession>
<name>RL1_VARPS</name>
<gene>
    <name evidence="1" type="primary">rplA</name>
    <name type="ordered locus">Vapar_0585</name>
</gene>
<proteinExistence type="inferred from homology"/>
<reference key="1">
    <citation type="journal article" date="2011" name="J. Bacteriol.">
        <title>Complete genome sequence of the metabolically versatile plant growth-promoting endophyte, Variovorax paradoxus S110.</title>
        <authorList>
            <person name="Han J.I."/>
            <person name="Choi H.K."/>
            <person name="Lee S.W."/>
            <person name="Orwin P.M."/>
            <person name="Kim J."/>
            <person name="Laroe S.L."/>
            <person name="Kim T.G."/>
            <person name="O'Neil J."/>
            <person name="Leadbetter J.R."/>
            <person name="Lee S.Y."/>
            <person name="Hur C.G."/>
            <person name="Spain J.C."/>
            <person name="Ovchinnikova G."/>
            <person name="Goodwin L."/>
            <person name="Han C."/>
        </authorList>
    </citation>
    <scope>NUCLEOTIDE SEQUENCE [LARGE SCALE GENOMIC DNA]</scope>
    <source>
        <strain>S110</strain>
    </source>
</reference>
<comment type="function">
    <text evidence="1">Binds directly to 23S rRNA. The L1 stalk is quite mobile in the ribosome, and is involved in E site tRNA release.</text>
</comment>
<comment type="function">
    <text evidence="1">Protein L1 is also a translational repressor protein, it controls the translation of the L11 operon by binding to its mRNA.</text>
</comment>
<comment type="subunit">
    <text evidence="1">Part of the 50S ribosomal subunit.</text>
</comment>
<comment type="similarity">
    <text evidence="1">Belongs to the universal ribosomal protein uL1 family.</text>
</comment>